<proteinExistence type="evidence at protein level"/>
<reference key="1">
    <citation type="journal article" date="2005" name="Plant Physiol.">
        <title>Biotin synthesis in plants. The first committed step of the pathway is catalyzed by a cytosolic 7-keto-8-aminopelargonic acid synthase.</title>
        <authorList>
            <person name="Pinon V."/>
            <person name="Ravanel S."/>
            <person name="Douce R."/>
            <person name="Alban C."/>
        </authorList>
    </citation>
    <scope>NUCLEOTIDE SEQUENCE [MRNA] (ISOFORM 1)</scope>
    <scope>FUNCTION</scope>
    <scope>SUBUNIT</scope>
    <scope>COFACTOR</scope>
    <scope>CATALYTIC ACTIVITY</scope>
    <scope>SUBCELLULAR LOCATION</scope>
    <scope>BIOPHYSICOCHEMICAL PROPERTIES</scope>
    <scope>PATHWAY</scope>
    <source>
        <strain>cv. Columbia</strain>
        <strain>cv. Wassilewskija</strain>
    </source>
</reference>
<reference key="2">
    <citation type="journal article" date="2000" name="Nature">
        <title>Sequence and analysis of chromosome 5 of the plant Arabidopsis thaliana.</title>
        <authorList>
            <person name="Tabata S."/>
            <person name="Kaneko T."/>
            <person name="Nakamura Y."/>
            <person name="Kotani H."/>
            <person name="Kato T."/>
            <person name="Asamizu E."/>
            <person name="Miyajima N."/>
            <person name="Sasamoto S."/>
            <person name="Kimura T."/>
            <person name="Hosouchi T."/>
            <person name="Kawashima K."/>
            <person name="Kohara M."/>
            <person name="Matsumoto M."/>
            <person name="Matsuno A."/>
            <person name="Muraki A."/>
            <person name="Nakayama S."/>
            <person name="Nakazaki N."/>
            <person name="Naruo K."/>
            <person name="Okumura S."/>
            <person name="Shinpo S."/>
            <person name="Takeuchi C."/>
            <person name="Wada T."/>
            <person name="Watanabe A."/>
            <person name="Yamada M."/>
            <person name="Yasuda M."/>
            <person name="Sato S."/>
            <person name="de la Bastide M."/>
            <person name="Huang E."/>
            <person name="Spiegel L."/>
            <person name="Gnoj L."/>
            <person name="O'Shaughnessy A."/>
            <person name="Preston R."/>
            <person name="Habermann K."/>
            <person name="Murray J."/>
            <person name="Johnson D."/>
            <person name="Rohlfing T."/>
            <person name="Nelson J."/>
            <person name="Stoneking T."/>
            <person name="Pepin K."/>
            <person name="Spieth J."/>
            <person name="Sekhon M."/>
            <person name="Armstrong J."/>
            <person name="Becker M."/>
            <person name="Belter E."/>
            <person name="Cordum H."/>
            <person name="Cordes M."/>
            <person name="Courtney L."/>
            <person name="Courtney W."/>
            <person name="Dante M."/>
            <person name="Du H."/>
            <person name="Edwards J."/>
            <person name="Fryman J."/>
            <person name="Haakensen B."/>
            <person name="Lamar E."/>
            <person name="Latreille P."/>
            <person name="Leonard S."/>
            <person name="Meyer R."/>
            <person name="Mulvaney E."/>
            <person name="Ozersky P."/>
            <person name="Riley A."/>
            <person name="Strowmatt C."/>
            <person name="Wagner-McPherson C."/>
            <person name="Wollam A."/>
            <person name="Yoakum M."/>
            <person name="Bell M."/>
            <person name="Dedhia N."/>
            <person name="Parnell L."/>
            <person name="Shah R."/>
            <person name="Rodriguez M."/>
            <person name="Hoon See L."/>
            <person name="Vil D."/>
            <person name="Baker J."/>
            <person name="Kirchoff K."/>
            <person name="Toth K."/>
            <person name="King L."/>
            <person name="Bahret A."/>
            <person name="Miller B."/>
            <person name="Marra M.A."/>
            <person name="Martienssen R."/>
            <person name="McCombie W.R."/>
            <person name="Wilson R.K."/>
            <person name="Murphy G."/>
            <person name="Bancroft I."/>
            <person name="Volckaert G."/>
            <person name="Wambutt R."/>
            <person name="Duesterhoeft A."/>
            <person name="Stiekema W."/>
            <person name="Pohl T."/>
            <person name="Entian K.-D."/>
            <person name="Terryn N."/>
            <person name="Hartley N."/>
            <person name="Bent E."/>
            <person name="Johnson S."/>
            <person name="Langham S.-A."/>
            <person name="McCullagh B."/>
            <person name="Robben J."/>
            <person name="Grymonprez B."/>
            <person name="Zimmermann W."/>
            <person name="Ramsperger U."/>
            <person name="Wedler H."/>
            <person name="Balke K."/>
            <person name="Wedler E."/>
            <person name="Peters S."/>
            <person name="van Staveren M."/>
            <person name="Dirkse W."/>
            <person name="Mooijman P."/>
            <person name="Klein Lankhorst R."/>
            <person name="Weitzenegger T."/>
            <person name="Bothe G."/>
            <person name="Rose M."/>
            <person name="Hauf J."/>
            <person name="Berneiser S."/>
            <person name="Hempel S."/>
            <person name="Feldpausch M."/>
            <person name="Lamberth S."/>
            <person name="Villarroel R."/>
            <person name="Gielen J."/>
            <person name="Ardiles W."/>
            <person name="Bents O."/>
            <person name="Lemcke K."/>
            <person name="Kolesov G."/>
            <person name="Mayer K.F.X."/>
            <person name="Rudd S."/>
            <person name="Schoof H."/>
            <person name="Schueller C."/>
            <person name="Zaccaria P."/>
            <person name="Mewes H.-W."/>
            <person name="Bevan M."/>
            <person name="Fransz P.F."/>
        </authorList>
    </citation>
    <scope>NUCLEOTIDE SEQUENCE [LARGE SCALE GENOMIC DNA]</scope>
    <source>
        <strain>cv. Columbia</strain>
    </source>
</reference>
<reference key="3">
    <citation type="journal article" date="2017" name="Plant J.">
        <title>Araport11: a complete reannotation of the Arabidopsis thaliana reference genome.</title>
        <authorList>
            <person name="Cheng C.Y."/>
            <person name="Krishnakumar V."/>
            <person name="Chan A.P."/>
            <person name="Thibaud-Nissen F."/>
            <person name="Schobel S."/>
            <person name="Town C.D."/>
        </authorList>
    </citation>
    <scope>GENOME REANNOTATION</scope>
    <source>
        <strain>cv. Columbia</strain>
    </source>
</reference>
<reference key="4">
    <citation type="journal article" date="2002" name="Science">
        <title>Functional annotation of a full-length Arabidopsis cDNA collection.</title>
        <authorList>
            <person name="Seki M."/>
            <person name="Narusaka M."/>
            <person name="Kamiya A."/>
            <person name="Ishida J."/>
            <person name="Satou M."/>
            <person name="Sakurai T."/>
            <person name="Nakajima M."/>
            <person name="Enju A."/>
            <person name="Akiyama K."/>
            <person name="Oono Y."/>
            <person name="Muramatsu M."/>
            <person name="Hayashizaki Y."/>
            <person name="Kawai J."/>
            <person name="Carninci P."/>
            <person name="Itoh M."/>
            <person name="Ishii Y."/>
            <person name="Arakawa T."/>
            <person name="Shibata K."/>
            <person name="Shinagawa A."/>
            <person name="Shinozaki K."/>
        </authorList>
    </citation>
    <scope>NUCLEOTIDE SEQUENCE [LARGE SCALE MRNA] (ISOFORM 2)</scope>
    <source>
        <strain>cv. Columbia</strain>
    </source>
</reference>
<reference key="5">
    <citation type="submission" date="2006-08" db="EMBL/GenBank/DDBJ databases">
        <title>Arabidopsis ORF Clones.</title>
        <authorList>
            <person name="Quinitio C."/>
            <person name="Chen H."/>
            <person name="Kim C.J."/>
            <person name="Shinn P."/>
            <person name="Ecker J.R."/>
        </authorList>
    </citation>
    <scope>NUCLEOTIDE SEQUENCE [LARGE SCALE MRNA] (ISOFORM 2)</scope>
    <source>
        <strain>cv. Columbia</strain>
    </source>
</reference>
<reference key="6">
    <citation type="journal article" date="2011" name="J. Biol. Chem.">
        <title>Peroxisomes are involved in biotin biosynthesis in Aspergillus and Arabidopsis.</title>
        <authorList>
            <person name="Tanabe Y."/>
            <person name="Maruyama J."/>
            <person name="Yamaoka S."/>
            <person name="Yahagi D."/>
            <person name="Matsuo I."/>
            <person name="Tsutsumi N."/>
            <person name="Kitamoto K."/>
        </authorList>
    </citation>
    <scope>FUNCTION</scope>
    <scope>SUBCELLULAR LOCATION</scope>
    <scope>DOMAIN PTS1</scope>
    <scope>MUTAGENESIS OF 474-PRO--LEU-476</scope>
    <source>
        <strain>cv. Columbia</strain>
    </source>
</reference>
<reference key="7">
    <citation type="journal article" date="2012" name="Plant J.">
        <title>Biotin deficiency causes spontaneous cell death and activation of defense signaling.</title>
        <authorList>
            <person name="Li J."/>
            <person name="Brader G."/>
            <person name="Helenius E."/>
            <person name="Kariola T."/>
            <person name="Palva E.T."/>
        </authorList>
    </citation>
    <scope>FUNCTION</scope>
    <scope>DISRUPTION PHENOTYPE</scope>
    <source>
        <strain>cv. Columbia</strain>
    </source>
</reference>
<keyword id="KW-0025">Alternative splicing</keyword>
<keyword id="KW-0093">Biotin biosynthesis</keyword>
<keyword id="KW-0963">Cytoplasm</keyword>
<keyword id="KW-0576">Peroxisome</keyword>
<keyword id="KW-0663">Pyridoxal phosphate</keyword>
<keyword id="KW-1185">Reference proteome</keyword>
<keyword id="KW-0808">Transferase</keyword>
<feature type="chain" id="PRO_0000434308" description="8-amino-7-oxononanoate synthase">
    <location>
        <begin position="1"/>
        <end position="476"/>
    </location>
</feature>
<feature type="short sequence motif" description="Peroxisomal targeting signal PTS1" evidence="3">
    <location>
        <begin position="474"/>
        <end position="476"/>
    </location>
</feature>
<feature type="binding site" evidence="1">
    <location>
        <position position="24"/>
    </location>
    <ligand>
        <name>substrate</name>
    </ligand>
</feature>
<feature type="binding site" evidence="1">
    <location>
        <begin position="171"/>
        <end position="172"/>
    </location>
    <ligand>
        <name>pyridoxal 5'-phosphate</name>
        <dbReference type="ChEBI" id="CHEBI:597326"/>
    </ligand>
</feature>
<feature type="binding site" evidence="1">
    <location>
        <position position="210"/>
    </location>
    <ligand>
        <name>substrate</name>
    </ligand>
</feature>
<feature type="binding site" evidence="1">
    <location>
        <position position="260"/>
    </location>
    <ligand>
        <name>pyridoxal 5'-phosphate</name>
        <dbReference type="ChEBI" id="CHEBI:597326"/>
    </ligand>
</feature>
<feature type="binding site" evidence="1">
    <location>
        <begin position="285"/>
        <end position="288"/>
    </location>
    <ligand>
        <name>pyridoxal 5'-phosphate</name>
        <dbReference type="ChEBI" id="CHEBI:597326"/>
    </ligand>
</feature>
<feature type="binding site" evidence="1">
    <location>
        <begin position="316"/>
        <end position="319"/>
    </location>
    <ligand>
        <name>pyridoxal 5'-phosphate</name>
        <dbReference type="ChEBI" id="CHEBI:597326"/>
    </ligand>
</feature>
<feature type="binding site" evidence="1">
    <location>
        <position position="427"/>
    </location>
    <ligand>
        <name>substrate</name>
    </ligand>
</feature>
<feature type="modified residue" description="N6-(pyridoxal phosphate)lysine" evidence="1">
    <location>
        <position position="319"/>
    </location>
</feature>
<feature type="splice variant" id="VSP_057924" description="In isoform 2.">
    <location>
        <begin position="1"/>
        <end position="133"/>
    </location>
</feature>
<feature type="mutagenesis site" description="Incorrect cytosolic localization and loss of biotin synthase activity." evidence="3">
    <location>
        <begin position="474"/>
        <end position="476"/>
    </location>
</feature>
<accession>Q8GW43</accession>
<accession>Q2QKD2</accession>
<accession>Q9LZ63</accession>
<dbReference type="EC" id="2.3.1.47" evidence="2"/>
<dbReference type="EMBL" id="DQ017966">
    <property type="protein sequence ID" value="AAY82238.1"/>
    <property type="molecule type" value="mRNA"/>
</dbReference>
<dbReference type="EMBL" id="AL162875">
    <property type="protein sequence ID" value="CAB85568.1"/>
    <property type="status" value="ALT_SEQ"/>
    <property type="molecule type" value="Genomic_DNA"/>
</dbReference>
<dbReference type="EMBL" id="CP002688">
    <property type="protein sequence ID" value="AED90765.1"/>
    <property type="molecule type" value="Genomic_DNA"/>
</dbReference>
<dbReference type="EMBL" id="CP002688">
    <property type="protein sequence ID" value="AED90766.1"/>
    <property type="molecule type" value="Genomic_DNA"/>
</dbReference>
<dbReference type="EMBL" id="AK119095">
    <property type="protein sequence ID" value="BAC43668.1"/>
    <property type="molecule type" value="mRNA"/>
</dbReference>
<dbReference type="EMBL" id="BT026507">
    <property type="protein sequence ID" value="ABH04614.1"/>
    <property type="molecule type" value="mRNA"/>
</dbReference>
<dbReference type="PIR" id="T48458">
    <property type="entry name" value="T48458"/>
</dbReference>
<dbReference type="RefSeq" id="NP_196082.2">
    <molecule id="Q8GW43-2"/>
    <property type="nucleotide sequence ID" value="NM_120544.3"/>
</dbReference>
<dbReference type="RefSeq" id="NP_974731.1">
    <molecule id="Q8GW43-1"/>
    <property type="nucleotide sequence ID" value="NM_203002.4"/>
</dbReference>
<dbReference type="SMR" id="Q8GW43"/>
<dbReference type="FunCoup" id="Q8GW43">
    <property type="interactions" value="1568"/>
</dbReference>
<dbReference type="STRING" id="3702.Q8GW43"/>
<dbReference type="PaxDb" id="3702-AT5G04620.2"/>
<dbReference type="ProteomicsDB" id="240352">
    <molecule id="Q8GW43-1"/>
</dbReference>
<dbReference type="EnsemblPlants" id="AT5G04620.1">
    <molecule id="Q8GW43-2"/>
    <property type="protein sequence ID" value="AT5G04620.1"/>
    <property type="gene ID" value="AT5G04620"/>
</dbReference>
<dbReference type="EnsemblPlants" id="AT5G04620.2">
    <molecule id="Q8GW43-1"/>
    <property type="protein sequence ID" value="AT5G04620.2"/>
    <property type="gene ID" value="AT5G04620"/>
</dbReference>
<dbReference type="GeneID" id="830339"/>
<dbReference type="Gramene" id="AT5G04620.1">
    <molecule id="Q8GW43-2"/>
    <property type="protein sequence ID" value="AT5G04620.1"/>
    <property type="gene ID" value="AT5G04620"/>
</dbReference>
<dbReference type="Gramene" id="AT5G04620.2">
    <molecule id="Q8GW43-1"/>
    <property type="protein sequence ID" value="AT5G04620.2"/>
    <property type="gene ID" value="AT5G04620"/>
</dbReference>
<dbReference type="KEGG" id="ath:AT5G04620"/>
<dbReference type="Araport" id="AT5G04620"/>
<dbReference type="TAIR" id="AT5G04620">
    <property type="gene designation" value="BIOF"/>
</dbReference>
<dbReference type="eggNOG" id="KOG1359">
    <property type="taxonomic scope" value="Eukaryota"/>
</dbReference>
<dbReference type="HOGENOM" id="CLU_015846_11_2_1"/>
<dbReference type="InParanoid" id="Q8GW43"/>
<dbReference type="OMA" id="GTHEYCD"/>
<dbReference type="OrthoDB" id="10263824at2759"/>
<dbReference type="PhylomeDB" id="Q8GW43"/>
<dbReference type="BRENDA" id="2.3.1.47">
    <property type="organism ID" value="399"/>
</dbReference>
<dbReference type="UniPathway" id="UPA00078">
    <property type="reaction ID" value="UER00159"/>
</dbReference>
<dbReference type="PRO" id="PR:Q8GW43"/>
<dbReference type="Proteomes" id="UP000006548">
    <property type="component" value="Chromosome 5"/>
</dbReference>
<dbReference type="ExpressionAtlas" id="Q8GW43">
    <property type="expression patterns" value="baseline and differential"/>
</dbReference>
<dbReference type="GO" id="GO:0005829">
    <property type="term" value="C:cytosol"/>
    <property type="evidence" value="ECO:0000314"/>
    <property type="project" value="TAIR"/>
</dbReference>
<dbReference type="GO" id="GO:0005777">
    <property type="term" value="C:peroxisome"/>
    <property type="evidence" value="ECO:0000314"/>
    <property type="project" value="UniProtKB"/>
</dbReference>
<dbReference type="GO" id="GO:0008710">
    <property type="term" value="F:8-amino-7-oxononanoate synthase activity"/>
    <property type="evidence" value="ECO:0007669"/>
    <property type="project" value="UniProtKB-EC"/>
</dbReference>
<dbReference type="GO" id="GO:0030170">
    <property type="term" value="F:pyridoxal phosphate binding"/>
    <property type="evidence" value="ECO:0007669"/>
    <property type="project" value="InterPro"/>
</dbReference>
<dbReference type="GO" id="GO:0009102">
    <property type="term" value="P:biotin biosynthetic process"/>
    <property type="evidence" value="ECO:0000314"/>
    <property type="project" value="TAIR"/>
</dbReference>
<dbReference type="FunFam" id="3.40.640.10:FF:000187">
    <property type="entry name" value="Biotin F"/>
    <property type="match status" value="1"/>
</dbReference>
<dbReference type="Gene3D" id="3.90.1150.10">
    <property type="entry name" value="Aspartate Aminotransferase, domain 1"/>
    <property type="match status" value="1"/>
</dbReference>
<dbReference type="Gene3D" id="3.40.640.10">
    <property type="entry name" value="Type I PLP-dependent aspartate aminotransferase-like (Major domain)"/>
    <property type="match status" value="1"/>
</dbReference>
<dbReference type="InterPro" id="IPR004839">
    <property type="entry name" value="Aminotransferase_I/II_large"/>
</dbReference>
<dbReference type="InterPro" id="IPR050087">
    <property type="entry name" value="AON_synthase_class-II"/>
</dbReference>
<dbReference type="InterPro" id="IPR015424">
    <property type="entry name" value="PyrdxlP-dep_Trfase"/>
</dbReference>
<dbReference type="InterPro" id="IPR015421">
    <property type="entry name" value="PyrdxlP-dep_Trfase_major"/>
</dbReference>
<dbReference type="InterPro" id="IPR015422">
    <property type="entry name" value="PyrdxlP-dep_Trfase_small"/>
</dbReference>
<dbReference type="PANTHER" id="PTHR13693:SF77">
    <property type="entry name" value="8-AMINO-7-OXONONANOATE SYNTHASE"/>
    <property type="match status" value="1"/>
</dbReference>
<dbReference type="PANTHER" id="PTHR13693">
    <property type="entry name" value="CLASS II AMINOTRANSFERASE/8-AMINO-7-OXONONANOATE SYNTHASE"/>
    <property type="match status" value="1"/>
</dbReference>
<dbReference type="Pfam" id="PF00155">
    <property type="entry name" value="Aminotran_1_2"/>
    <property type="match status" value="1"/>
</dbReference>
<dbReference type="SUPFAM" id="SSF53383">
    <property type="entry name" value="PLP-dependent transferases"/>
    <property type="match status" value="1"/>
</dbReference>
<name>BIOF_ARATH</name>
<evidence type="ECO:0000250" key="1">
    <source>
        <dbReference type="UniProtKB" id="P12998"/>
    </source>
</evidence>
<evidence type="ECO:0000269" key="2">
    <source>
    </source>
</evidence>
<evidence type="ECO:0000269" key="3">
    <source>
    </source>
</evidence>
<evidence type="ECO:0000269" key="4">
    <source>
    </source>
</evidence>
<evidence type="ECO:0000303" key="5">
    <source>
    </source>
</evidence>
<evidence type="ECO:0000303" key="6">
    <source>
    </source>
</evidence>
<evidence type="ECO:0000303" key="7">
    <source>
    </source>
</evidence>
<evidence type="ECO:0000305" key="8"/>
<evidence type="ECO:0000312" key="9">
    <source>
        <dbReference type="EMBL" id="AED90766.1"/>
    </source>
</evidence>
<evidence type="ECO:0000312" key="10">
    <source>
        <dbReference type="EMBL" id="BAC43668.1"/>
    </source>
</evidence>
<evidence type="ECO:0000312" key="11">
    <source>
        <dbReference type="EMBL" id="CAB85568.1"/>
    </source>
</evidence>
<organism evidence="10">
    <name type="scientific">Arabidopsis thaliana</name>
    <name type="common">Mouse-ear cress</name>
    <dbReference type="NCBI Taxonomy" id="3702"/>
    <lineage>
        <taxon>Eukaryota</taxon>
        <taxon>Viridiplantae</taxon>
        <taxon>Streptophyta</taxon>
        <taxon>Embryophyta</taxon>
        <taxon>Tracheophyta</taxon>
        <taxon>Spermatophyta</taxon>
        <taxon>Magnoliopsida</taxon>
        <taxon>eudicotyledons</taxon>
        <taxon>Gunneridae</taxon>
        <taxon>Pentapetalae</taxon>
        <taxon>rosids</taxon>
        <taxon>malvids</taxon>
        <taxon>Brassicales</taxon>
        <taxon>Brassicaceae</taxon>
        <taxon>Camelineae</taxon>
        <taxon>Arabidopsis</taxon>
    </lineage>
</organism>
<comment type="function">
    <text evidence="2 3 4">Catalyzes the decarboxylative condensation of pimeloyl-[acyl-carrier protein] and L-alanine to produce 8-amino-7-oxononanoate (AON), [acyl-carrier protein], and carbon dioxide (PubMed:16299174, PubMed:21730067). Required for the biosynthesis of D-biotin that prevents light-mediated cell death and modulates defense gene expression, probably by avoiding hydrogen peroxide H(2)O(2) accumulation (PubMed:22126457).</text>
</comment>
<comment type="catalytic activity">
    <reaction evidence="2">
        <text>6-carboxyhexanoyl-[ACP] + L-alanine + H(+) = (8S)-8-amino-7-oxononanoate + holo-[ACP] + CO2</text>
        <dbReference type="Rhea" id="RHEA:42288"/>
        <dbReference type="Rhea" id="RHEA-COMP:9685"/>
        <dbReference type="Rhea" id="RHEA-COMP:9955"/>
        <dbReference type="ChEBI" id="CHEBI:15378"/>
        <dbReference type="ChEBI" id="CHEBI:16526"/>
        <dbReference type="ChEBI" id="CHEBI:57972"/>
        <dbReference type="ChEBI" id="CHEBI:64479"/>
        <dbReference type="ChEBI" id="CHEBI:78846"/>
        <dbReference type="ChEBI" id="CHEBI:149468"/>
        <dbReference type="EC" id="2.3.1.47"/>
    </reaction>
</comment>
<comment type="cofactor">
    <cofactor evidence="2">
        <name>pyridoxal 5'-phosphate</name>
        <dbReference type="ChEBI" id="CHEBI:597326"/>
    </cofactor>
</comment>
<comment type="biophysicochemical properties">
    <kinetics>
        <KM evidence="2">1.6 uM for pimeloyl-CoA (at pH 7.5 and 30 degrees Celsius)</KM>
        <KM evidence="2">1.4 uM for L-alanine (at pH 7.5 and 30 degrees Celsius)</KM>
        <Vmax evidence="2">110.0 nmol/min/mg enzyme with pimeloyl-CoA as substrate (at pH 7.5 and 30 degrees Celsius)</Vmax>
        <Vmax evidence="2">125.0 nmol/min/mg enzyme with L-alanine as substrate (at pH 7.5 and 30 degrees Celsius)</Vmax>
        <text evidence="2">kcat is 0.1 sec(-1) with pimeloyl-CoA as substrate. kcat is 0.11 sec(-1) with L-alanine as substrate.</text>
    </kinetics>
</comment>
<comment type="pathway">
    <text evidence="2">Cofactor biosynthesis; biotin biosynthesis; 8-amino-7-oxononanoate from pimeloyl-CoA: step 1/1.</text>
</comment>
<comment type="subunit">
    <text evidence="2">Monomer.</text>
</comment>
<comment type="subcellular location">
    <subcellularLocation>
        <location evidence="2">Cytoplasm</location>
        <location evidence="2">Cytosol</location>
    </subcellularLocation>
    <subcellularLocation>
        <location evidence="3">Peroxisome</location>
    </subcellularLocation>
    <text evidence="6">The cytosolic localization observed in PubMed:16299174 is probably due to the lack of PTS1 domain at the C-terminus of the reporter gene construct.</text>
</comment>
<comment type="alternative products">
    <event type="alternative splicing"/>
    <isoform>
        <id>Q8GW43-1</id>
        <name>1</name>
        <sequence type="displayed"/>
    </isoform>
    <isoform>
        <id>Q8GW43-2</id>
        <name>2</name>
        <sequence type="described" ref="VSP_057924"/>
    </isoform>
</comment>
<comment type="domain">
    <text evidence="3">The C-terminus PTS1 domain (474-476) is required for biotin biosynthesis activity and peroxisomal subcellular localization.</text>
</comment>
<comment type="disruption phenotype">
    <text evidence="4">Light-dependent spontaneous cell death due to the absence of D-biotin. Strong accumulation of hydrogen peroxide H(2)O(2) and constitutive up-regulation of reactive oxygen species- (ROS)-responsive and defense genes. Reduction of both chloroplastic and nuclear biotinylated proteins. Accumulation of conjugated salicylic acid (SA).</text>
</comment>
<comment type="similarity">
    <text evidence="8">Belongs to the class-II pyridoxal-phosphate-dependent aminotransferase family. BioF subfamily.</text>
</comment>
<comment type="sequence caution" evidence="8">
    <conflict type="erroneous gene model prediction">
        <sequence resource="EMBL-CDS" id="CAB85568"/>
    </conflict>
</comment>
<gene>
    <name evidence="5" type="primary">BIOF</name>
    <name evidence="7" type="synonym">BIO4</name>
    <name evidence="9" type="ordered locus">At5g04620</name>
    <name evidence="11" type="ORF">T32M21.220</name>
</gene>
<sequence length="476" mass="52171">MADHSWDKTVEEAVNVLESRQILRSLRPICMSRQNEEEIVKSRANGGDGYEVFDGLCQWDRTSVEVSVSIPTFQKWLHDEPSNGEEIFSGDALAECRKGRFKKLLLFSGNDYLGLSSHPTISNAAANAVKEYGMGPKGSALICGYTTYHRLLESSLAQLKKKEDCLVCPTGFAANMAAMVAIGSVASLLAASGKPLKNEKVAIFSDALNHASIIDGVRLAERQGNVEVFVYRHCDMYHLNSLLSNCKMKRKVVVTDSLFSMDGDFAPMEELSQLRKKYGFLLVIDDAHGTFVCGENGGGVAEEFNCEADVDLCVGTLSKAAGCHGGFIACSKKWKQLIQSRGRSFIFSTAIPVPMAAAAYAAVVVARKEIWRRKAIWERVKEFKELSGVDISSPIISLVVGNQEKALKASRYLLKSGFHVMAIRPPTVPPNSCRLRVTLSAAHTTEDVKKLITALSSCLDFDNTATHIPSFLFPKL</sequence>
<protein>
    <recommendedName>
        <fullName>8-amino-7-oxononanoate synthase</fullName>
        <shortName>AONS</shortName>
        <ecNumber evidence="2">2.3.1.47</ecNumber>
    </recommendedName>
    <alternativeName>
        <fullName evidence="5">7-keto-8-amino-pelargonic acid synthase</fullName>
        <shortName evidence="5">7-KAP synthase</shortName>
        <shortName evidence="5">KAPA synthase</shortName>
    </alternativeName>
    <alternativeName>
        <fullName>8-amino-7-ketopelargonate synthase</fullName>
    </alternativeName>
    <alternativeName>
        <fullName evidence="7">Biotin synthase 4</fullName>
    </alternativeName>
    <alternativeName>
        <fullName evidence="5">Biotin synthase F</fullName>
        <shortName evidence="5">AtbioF</shortName>
    </alternativeName>
</protein>